<accession>Q2A1I2</accession>
<keyword id="KW-0066">ATP synthesis</keyword>
<keyword id="KW-0067">ATP-binding</keyword>
<keyword id="KW-0997">Cell inner membrane</keyword>
<keyword id="KW-1003">Cell membrane</keyword>
<keyword id="KW-0139">CF(1)</keyword>
<keyword id="KW-0375">Hydrogen ion transport</keyword>
<keyword id="KW-0406">Ion transport</keyword>
<keyword id="KW-0472">Membrane</keyword>
<keyword id="KW-0547">Nucleotide-binding</keyword>
<keyword id="KW-1185">Reference proteome</keyword>
<keyword id="KW-1278">Translocase</keyword>
<keyword id="KW-0813">Transport</keyword>
<comment type="function">
    <text evidence="1">Produces ATP from ADP in the presence of a proton gradient across the membrane. The catalytic sites are hosted primarily by the beta subunits.</text>
</comment>
<comment type="catalytic activity">
    <reaction evidence="1">
        <text>ATP + H2O + 4 H(+)(in) = ADP + phosphate + 5 H(+)(out)</text>
        <dbReference type="Rhea" id="RHEA:57720"/>
        <dbReference type="ChEBI" id="CHEBI:15377"/>
        <dbReference type="ChEBI" id="CHEBI:15378"/>
        <dbReference type="ChEBI" id="CHEBI:30616"/>
        <dbReference type="ChEBI" id="CHEBI:43474"/>
        <dbReference type="ChEBI" id="CHEBI:456216"/>
        <dbReference type="EC" id="7.1.2.2"/>
    </reaction>
</comment>
<comment type="subunit">
    <text evidence="1">F-type ATPases have 2 components, CF(1) - the catalytic core - and CF(0) - the membrane proton channel. CF(1) has five subunits: alpha(3), beta(3), gamma(1), delta(1), epsilon(1). CF(0) has three main subunits: a(1), b(2) and c(9-12). The alpha and beta chains form an alternating ring which encloses part of the gamma chain. CF(1) is attached to CF(0) by a central stalk formed by the gamma and epsilon chains, while a peripheral stalk is formed by the delta and b chains.</text>
</comment>
<comment type="subcellular location">
    <subcellularLocation>
        <location evidence="1">Cell inner membrane</location>
        <topology evidence="1">Peripheral membrane protein</topology>
    </subcellularLocation>
</comment>
<comment type="similarity">
    <text evidence="1">Belongs to the ATPase alpha/beta chains family.</text>
</comment>
<proteinExistence type="inferred from homology"/>
<name>ATPB_FRATH</name>
<dbReference type="EC" id="7.1.2.2" evidence="1"/>
<dbReference type="EMBL" id="AM233362">
    <property type="protein sequence ID" value="CAJ80234.1"/>
    <property type="molecule type" value="Genomic_DNA"/>
</dbReference>
<dbReference type="RefSeq" id="WP_003017334.1">
    <property type="nucleotide sequence ID" value="NZ_CP009694.1"/>
</dbReference>
<dbReference type="SMR" id="Q2A1I2"/>
<dbReference type="KEGG" id="ftl:FTL_1795"/>
<dbReference type="Proteomes" id="UP000001944">
    <property type="component" value="Chromosome"/>
</dbReference>
<dbReference type="GO" id="GO:0005886">
    <property type="term" value="C:plasma membrane"/>
    <property type="evidence" value="ECO:0007669"/>
    <property type="project" value="UniProtKB-SubCell"/>
</dbReference>
<dbReference type="GO" id="GO:0045259">
    <property type="term" value="C:proton-transporting ATP synthase complex"/>
    <property type="evidence" value="ECO:0007669"/>
    <property type="project" value="UniProtKB-KW"/>
</dbReference>
<dbReference type="GO" id="GO:0005524">
    <property type="term" value="F:ATP binding"/>
    <property type="evidence" value="ECO:0007669"/>
    <property type="project" value="UniProtKB-UniRule"/>
</dbReference>
<dbReference type="GO" id="GO:0016887">
    <property type="term" value="F:ATP hydrolysis activity"/>
    <property type="evidence" value="ECO:0007669"/>
    <property type="project" value="InterPro"/>
</dbReference>
<dbReference type="GO" id="GO:0046933">
    <property type="term" value="F:proton-transporting ATP synthase activity, rotational mechanism"/>
    <property type="evidence" value="ECO:0007669"/>
    <property type="project" value="UniProtKB-UniRule"/>
</dbReference>
<dbReference type="CDD" id="cd18110">
    <property type="entry name" value="ATP-synt_F1_beta_C"/>
    <property type="match status" value="1"/>
</dbReference>
<dbReference type="CDD" id="cd18115">
    <property type="entry name" value="ATP-synt_F1_beta_N"/>
    <property type="match status" value="1"/>
</dbReference>
<dbReference type="CDD" id="cd01133">
    <property type="entry name" value="F1-ATPase_beta_CD"/>
    <property type="match status" value="1"/>
</dbReference>
<dbReference type="FunFam" id="1.10.1140.10:FF:000001">
    <property type="entry name" value="ATP synthase subunit beta"/>
    <property type="match status" value="1"/>
</dbReference>
<dbReference type="FunFam" id="2.40.10.170:FF:000003">
    <property type="entry name" value="ATP synthase subunit beta"/>
    <property type="match status" value="1"/>
</dbReference>
<dbReference type="FunFam" id="3.40.50.300:FF:000004">
    <property type="entry name" value="ATP synthase subunit beta"/>
    <property type="match status" value="1"/>
</dbReference>
<dbReference type="Gene3D" id="2.40.10.170">
    <property type="match status" value="1"/>
</dbReference>
<dbReference type="Gene3D" id="1.10.1140.10">
    <property type="entry name" value="Bovine Mitochondrial F1-atpase, Atp Synthase Beta Chain, Chain D, domain 3"/>
    <property type="match status" value="1"/>
</dbReference>
<dbReference type="Gene3D" id="3.40.50.300">
    <property type="entry name" value="P-loop containing nucleotide triphosphate hydrolases"/>
    <property type="match status" value="1"/>
</dbReference>
<dbReference type="HAMAP" id="MF_01347">
    <property type="entry name" value="ATP_synth_beta_bact"/>
    <property type="match status" value="1"/>
</dbReference>
<dbReference type="InterPro" id="IPR003593">
    <property type="entry name" value="AAA+_ATPase"/>
</dbReference>
<dbReference type="InterPro" id="IPR055190">
    <property type="entry name" value="ATP-synt_VA_C"/>
</dbReference>
<dbReference type="InterPro" id="IPR005722">
    <property type="entry name" value="ATP_synth_F1_bsu"/>
</dbReference>
<dbReference type="InterPro" id="IPR020003">
    <property type="entry name" value="ATPase_a/bsu_AS"/>
</dbReference>
<dbReference type="InterPro" id="IPR050053">
    <property type="entry name" value="ATPase_alpha/beta_chains"/>
</dbReference>
<dbReference type="InterPro" id="IPR004100">
    <property type="entry name" value="ATPase_F1/V1/A1_a/bsu_N"/>
</dbReference>
<dbReference type="InterPro" id="IPR036121">
    <property type="entry name" value="ATPase_F1/V1/A1_a/bsu_N_sf"/>
</dbReference>
<dbReference type="InterPro" id="IPR000194">
    <property type="entry name" value="ATPase_F1/V1/A1_a/bsu_nucl-bd"/>
</dbReference>
<dbReference type="InterPro" id="IPR024034">
    <property type="entry name" value="ATPase_F1/V1_b/a_C"/>
</dbReference>
<dbReference type="InterPro" id="IPR027417">
    <property type="entry name" value="P-loop_NTPase"/>
</dbReference>
<dbReference type="NCBIfam" id="TIGR01039">
    <property type="entry name" value="atpD"/>
    <property type="match status" value="1"/>
</dbReference>
<dbReference type="PANTHER" id="PTHR15184">
    <property type="entry name" value="ATP SYNTHASE"/>
    <property type="match status" value="1"/>
</dbReference>
<dbReference type="PANTHER" id="PTHR15184:SF71">
    <property type="entry name" value="ATP SYNTHASE SUBUNIT BETA, MITOCHONDRIAL"/>
    <property type="match status" value="1"/>
</dbReference>
<dbReference type="Pfam" id="PF00006">
    <property type="entry name" value="ATP-synt_ab"/>
    <property type="match status" value="1"/>
</dbReference>
<dbReference type="Pfam" id="PF02874">
    <property type="entry name" value="ATP-synt_ab_N"/>
    <property type="match status" value="1"/>
</dbReference>
<dbReference type="Pfam" id="PF22919">
    <property type="entry name" value="ATP-synt_VA_C"/>
    <property type="match status" value="1"/>
</dbReference>
<dbReference type="SMART" id="SM00382">
    <property type="entry name" value="AAA"/>
    <property type="match status" value="1"/>
</dbReference>
<dbReference type="SUPFAM" id="SSF47917">
    <property type="entry name" value="C-terminal domain of alpha and beta subunits of F1 ATP synthase"/>
    <property type="match status" value="1"/>
</dbReference>
<dbReference type="SUPFAM" id="SSF50615">
    <property type="entry name" value="N-terminal domain of alpha and beta subunits of F1 ATP synthase"/>
    <property type="match status" value="1"/>
</dbReference>
<dbReference type="SUPFAM" id="SSF52540">
    <property type="entry name" value="P-loop containing nucleoside triphosphate hydrolases"/>
    <property type="match status" value="1"/>
</dbReference>
<dbReference type="PROSITE" id="PS00152">
    <property type="entry name" value="ATPASE_ALPHA_BETA"/>
    <property type="match status" value="1"/>
</dbReference>
<feature type="chain" id="PRO_0000254263" description="ATP synthase subunit beta">
    <location>
        <begin position="1"/>
        <end position="458"/>
    </location>
</feature>
<feature type="binding site" evidence="1">
    <location>
        <begin position="148"/>
        <end position="155"/>
    </location>
    <ligand>
        <name>ATP</name>
        <dbReference type="ChEBI" id="CHEBI:30616"/>
    </ligand>
</feature>
<reference key="1">
    <citation type="submission" date="2006-03" db="EMBL/GenBank/DDBJ databases">
        <title>Complete genome sequence of Francisella tularensis LVS (Live Vaccine Strain).</title>
        <authorList>
            <person name="Chain P."/>
            <person name="Larimer F."/>
            <person name="Land M."/>
            <person name="Stilwagen S."/>
            <person name="Larsson P."/>
            <person name="Bearden S."/>
            <person name="Chu M."/>
            <person name="Oyston P."/>
            <person name="Forsman M."/>
            <person name="Andersson S."/>
            <person name="Lindler L."/>
            <person name="Titball R."/>
            <person name="Garcia E."/>
        </authorList>
    </citation>
    <scope>NUCLEOTIDE SEQUENCE [LARGE SCALE GENOMIC DNA]</scope>
    <source>
        <strain>LVS</strain>
    </source>
</reference>
<evidence type="ECO:0000255" key="1">
    <source>
        <dbReference type="HAMAP-Rule" id="MF_01347"/>
    </source>
</evidence>
<gene>
    <name evidence="1" type="primary">atpD</name>
    <name type="ordered locus">FTL_1795</name>
</gene>
<sequence length="458" mass="49865">MSTGKIIQVIGAVIDVEFARDNTPKVYDALNVVEAGLVLEVQQQIGDGVVRTIAMGSSDGLRRGMEVKNTNAPISVPVGHGTLGRIMNVLGEPIDEAGPIEYTEKRSIHQAPPAYDELALSTEILETGIKVVDLICPFAKGGKVGLFGGAGVGKTVTMMELINNIAKEHSGYSVFSGVGERTREGNDFYYEMKYSNVLDKVSLVYGQMNEPPGNRLRVALSGLTIAEGFRDEKRDVLMFIDNIYRYTLAGTEVSALLGRMPSAVGYQPTLAAEMGALQERITSTKTGSITSVQAVYVPADDLTDPSPATTFSHLDATIVLSRQIAELGIYPAVDPLDSTSRQLDPLVVGQDHYETARAVQKVLQRYKELKDIIAILGMDELSDEDKKIVDRARKIQRFLSQPFHVAEVFTGNPGKFVSLKDTVASFKAIVNGEYDHLPEQAFYMVGSIQEAIEKAKTL</sequence>
<organism>
    <name type="scientific">Francisella tularensis subsp. holarctica (strain LVS)</name>
    <dbReference type="NCBI Taxonomy" id="376619"/>
    <lineage>
        <taxon>Bacteria</taxon>
        <taxon>Pseudomonadati</taxon>
        <taxon>Pseudomonadota</taxon>
        <taxon>Gammaproteobacteria</taxon>
        <taxon>Thiotrichales</taxon>
        <taxon>Francisellaceae</taxon>
        <taxon>Francisella</taxon>
    </lineage>
</organism>
<protein>
    <recommendedName>
        <fullName evidence="1">ATP synthase subunit beta</fullName>
        <ecNumber evidence="1">7.1.2.2</ecNumber>
    </recommendedName>
    <alternativeName>
        <fullName evidence="1">ATP synthase F1 sector subunit beta</fullName>
    </alternativeName>
    <alternativeName>
        <fullName evidence="1">F-ATPase subunit beta</fullName>
    </alternativeName>
</protein>